<keyword id="KW-0378">Hydrolase</keyword>
<keyword id="KW-0546">Nucleotide metabolism</keyword>
<keyword id="KW-0547">Nucleotide-binding</keyword>
<gene>
    <name evidence="1" type="primary">dcd</name>
    <name type="ordered locus">BamMC406_2346</name>
</gene>
<protein>
    <recommendedName>
        <fullName evidence="1">dCTP deaminase</fullName>
        <ecNumber evidence="1">3.5.4.13</ecNumber>
    </recommendedName>
    <alternativeName>
        <fullName evidence="1">Deoxycytidine triphosphate deaminase</fullName>
    </alternativeName>
</protein>
<feature type="chain" id="PRO_1000096408" description="dCTP deaminase">
    <location>
        <begin position="1"/>
        <end position="189"/>
    </location>
</feature>
<feature type="active site" description="Proton donor/acceptor" evidence="1">
    <location>
        <position position="138"/>
    </location>
</feature>
<feature type="binding site" evidence="1">
    <location>
        <begin position="112"/>
        <end position="117"/>
    </location>
    <ligand>
        <name>dCTP</name>
        <dbReference type="ChEBI" id="CHEBI:61481"/>
    </ligand>
</feature>
<feature type="binding site" evidence="1">
    <location>
        <begin position="136"/>
        <end position="138"/>
    </location>
    <ligand>
        <name>dCTP</name>
        <dbReference type="ChEBI" id="CHEBI:61481"/>
    </ligand>
</feature>
<feature type="binding site" evidence="1">
    <location>
        <position position="157"/>
    </location>
    <ligand>
        <name>dCTP</name>
        <dbReference type="ChEBI" id="CHEBI:61481"/>
    </ligand>
</feature>
<feature type="binding site" evidence="1">
    <location>
        <position position="171"/>
    </location>
    <ligand>
        <name>dCTP</name>
        <dbReference type="ChEBI" id="CHEBI:61481"/>
    </ligand>
</feature>
<feature type="binding site" evidence="1">
    <location>
        <position position="181"/>
    </location>
    <ligand>
        <name>dCTP</name>
        <dbReference type="ChEBI" id="CHEBI:61481"/>
    </ligand>
</feature>
<sequence>MSIKSDKWIRRMAEEHKMIEPFVPDQVRASEDGRRIVSYGTSSYGYDIRCADEFKIFTNINSTIVDPKNFDEGSFVDFKGDVCIIPPNSFALARTVEYFRIPRTVLTVCLGKSTYARCGIIVNVTPFEPEWEGYVTLEFSNTTPLPAKIYANEGVAQVLFFESDEVCDVSYADRGGKYQGQRGVTLPKT</sequence>
<accession>B1YUS8</accession>
<organism>
    <name type="scientific">Burkholderia ambifaria (strain MC40-6)</name>
    <dbReference type="NCBI Taxonomy" id="398577"/>
    <lineage>
        <taxon>Bacteria</taxon>
        <taxon>Pseudomonadati</taxon>
        <taxon>Pseudomonadota</taxon>
        <taxon>Betaproteobacteria</taxon>
        <taxon>Burkholderiales</taxon>
        <taxon>Burkholderiaceae</taxon>
        <taxon>Burkholderia</taxon>
        <taxon>Burkholderia cepacia complex</taxon>
    </lineage>
</organism>
<dbReference type="EC" id="3.5.4.13" evidence="1"/>
<dbReference type="EMBL" id="CP001025">
    <property type="protein sequence ID" value="ACB64824.1"/>
    <property type="molecule type" value="Genomic_DNA"/>
</dbReference>
<dbReference type="RefSeq" id="WP_006398615.1">
    <property type="nucleotide sequence ID" value="NC_010551.1"/>
</dbReference>
<dbReference type="SMR" id="B1YUS8"/>
<dbReference type="GeneID" id="98107731"/>
<dbReference type="KEGG" id="bac:BamMC406_2346"/>
<dbReference type="HOGENOM" id="CLU_087476_4_0_4"/>
<dbReference type="OrthoDB" id="9780956at2"/>
<dbReference type="UniPathway" id="UPA00610">
    <property type="reaction ID" value="UER00665"/>
</dbReference>
<dbReference type="Proteomes" id="UP000001680">
    <property type="component" value="Chromosome 1"/>
</dbReference>
<dbReference type="GO" id="GO:0008829">
    <property type="term" value="F:dCTP deaminase activity"/>
    <property type="evidence" value="ECO:0007669"/>
    <property type="project" value="UniProtKB-UniRule"/>
</dbReference>
<dbReference type="GO" id="GO:0000166">
    <property type="term" value="F:nucleotide binding"/>
    <property type="evidence" value="ECO:0007669"/>
    <property type="project" value="UniProtKB-KW"/>
</dbReference>
<dbReference type="GO" id="GO:0006226">
    <property type="term" value="P:dUMP biosynthetic process"/>
    <property type="evidence" value="ECO:0007669"/>
    <property type="project" value="UniProtKB-UniPathway"/>
</dbReference>
<dbReference type="GO" id="GO:0006229">
    <property type="term" value="P:dUTP biosynthetic process"/>
    <property type="evidence" value="ECO:0007669"/>
    <property type="project" value="UniProtKB-UniRule"/>
</dbReference>
<dbReference type="GO" id="GO:0015949">
    <property type="term" value="P:nucleobase-containing small molecule interconversion"/>
    <property type="evidence" value="ECO:0007669"/>
    <property type="project" value="TreeGrafter"/>
</dbReference>
<dbReference type="CDD" id="cd07557">
    <property type="entry name" value="trimeric_dUTPase"/>
    <property type="match status" value="1"/>
</dbReference>
<dbReference type="FunFam" id="2.70.40.10:FF:000001">
    <property type="entry name" value="dCTP deaminase"/>
    <property type="match status" value="1"/>
</dbReference>
<dbReference type="Gene3D" id="2.70.40.10">
    <property type="match status" value="1"/>
</dbReference>
<dbReference type="HAMAP" id="MF_00146">
    <property type="entry name" value="dCTP_deaminase"/>
    <property type="match status" value="1"/>
</dbReference>
<dbReference type="InterPro" id="IPR011962">
    <property type="entry name" value="dCTP_deaminase"/>
</dbReference>
<dbReference type="InterPro" id="IPR036157">
    <property type="entry name" value="dUTPase-like_sf"/>
</dbReference>
<dbReference type="InterPro" id="IPR033704">
    <property type="entry name" value="dUTPase_trimeric"/>
</dbReference>
<dbReference type="NCBIfam" id="TIGR02274">
    <property type="entry name" value="dCTP_deam"/>
    <property type="match status" value="1"/>
</dbReference>
<dbReference type="PANTHER" id="PTHR42680">
    <property type="entry name" value="DCTP DEAMINASE"/>
    <property type="match status" value="1"/>
</dbReference>
<dbReference type="PANTHER" id="PTHR42680:SF3">
    <property type="entry name" value="DCTP DEAMINASE"/>
    <property type="match status" value="1"/>
</dbReference>
<dbReference type="Pfam" id="PF22769">
    <property type="entry name" value="DCD"/>
    <property type="match status" value="1"/>
</dbReference>
<dbReference type="SUPFAM" id="SSF51283">
    <property type="entry name" value="dUTPase-like"/>
    <property type="match status" value="1"/>
</dbReference>
<proteinExistence type="inferred from homology"/>
<comment type="function">
    <text evidence="1">Catalyzes the deamination of dCTP to dUTP.</text>
</comment>
<comment type="catalytic activity">
    <reaction evidence="1">
        <text>dCTP + H2O + H(+) = dUTP + NH4(+)</text>
        <dbReference type="Rhea" id="RHEA:22680"/>
        <dbReference type="ChEBI" id="CHEBI:15377"/>
        <dbReference type="ChEBI" id="CHEBI:15378"/>
        <dbReference type="ChEBI" id="CHEBI:28938"/>
        <dbReference type="ChEBI" id="CHEBI:61481"/>
        <dbReference type="ChEBI" id="CHEBI:61555"/>
        <dbReference type="EC" id="3.5.4.13"/>
    </reaction>
</comment>
<comment type="pathway">
    <text evidence="1">Pyrimidine metabolism; dUMP biosynthesis; dUMP from dCTP (dUTP route): step 1/2.</text>
</comment>
<comment type="subunit">
    <text evidence="1">Homotrimer.</text>
</comment>
<comment type="similarity">
    <text evidence="1">Belongs to the dCTP deaminase family.</text>
</comment>
<reference key="1">
    <citation type="submission" date="2008-04" db="EMBL/GenBank/DDBJ databases">
        <title>Complete sequence of chromosome 1 of Burkholderia ambifaria MC40-6.</title>
        <authorList>
            <person name="Copeland A."/>
            <person name="Lucas S."/>
            <person name="Lapidus A."/>
            <person name="Glavina del Rio T."/>
            <person name="Dalin E."/>
            <person name="Tice H."/>
            <person name="Pitluck S."/>
            <person name="Chain P."/>
            <person name="Malfatti S."/>
            <person name="Shin M."/>
            <person name="Vergez L."/>
            <person name="Lang D."/>
            <person name="Schmutz J."/>
            <person name="Larimer F."/>
            <person name="Land M."/>
            <person name="Hauser L."/>
            <person name="Kyrpides N."/>
            <person name="Lykidis A."/>
            <person name="Ramette A."/>
            <person name="Konstantinidis K."/>
            <person name="Tiedje J."/>
            <person name="Richardson P."/>
        </authorList>
    </citation>
    <scope>NUCLEOTIDE SEQUENCE [LARGE SCALE GENOMIC DNA]</scope>
    <source>
        <strain>MC40-6</strain>
    </source>
</reference>
<name>DCD_BURA4</name>
<evidence type="ECO:0000255" key="1">
    <source>
        <dbReference type="HAMAP-Rule" id="MF_00146"/>
    </source>
</evidence>